<feature type="chain" id="PRO_1000119955" description="Exodeoxyribonuclease 7 small subunit">
    <location>
        <begin position="1"/>
        <end position="80"/>
    </location>
</feature>
<evidence type="ECO:0000255" key="1">
    <source>
        <dbReference type="HAMAP-Rule" id="MF_00337"/>
    </source>
</evidence>
<reference key="1">
    <citation type="journal article" date="2009" name="BMC Genomics">
        <title>Pseudogene accumulation in the evolutionary histories of Salmonella enterica serovars Paratyphi A and Typhi.</title>
        <authorList>
            <person name="Holt K.E."/>
            <person name="Thomson N.R."/>
            <person name="Wain J."/>
            <person name="Langridge G.C."/>
            <person name="Hasan R."/>
            <person name="Bhutta Z.A."/>
            <person name="Quail M.A."/>
            <person name="Norbertczak H."/>
            <person name="Walker D."/>
            <person name="Simmonds M."/>
            <person name="White B."/>
            <person name="Bason N."/>
            <person name="Mungall K."/>
            <person name="Dougan G."/>
            <person name="Parkhill J."/>
        </authorList>
    </citation>
    <scope>NUCLEOTIDE SEQUENCE [LARGE SCALE GENOMIC DNA]</scope>
    <source>
        <strain>AKU_12601</strain>
    </source>
</reference>
<accession>B5BDA8</accession>
<protein>
    <recommendedName>
        <fullName evidence="1">Exodeoxyribonuclease 7 small subunit</fullName>
        <ecNumber evidence="1">3.1.11.6</ecNumber>
    </recommendedName>
    <alternativeName>
        <fullName evidence="1">Exodeoxyribonuclease VII small subunit</fullName>
        <shortName evidence="1">Exonuclease VII small subunit</shortName>
    </alternativeName>
</protein>
<name>EX7S_SALPK</name>
<proteinExistence type="inferred from homology"/>
<comment type="function">
    <text evidence="1">Bidirectionally degrades single-stranded DNA into large acid-insoluble oligonucleotides, which are then degraded further into small acid-soluble oligonucleotides.</text>
</comment>
<comment type="catalytic activity">
    <reaction evidence="1">
        <text>Exonucleolytic cleavage in either 5'- to 3'- or 3'- to 5'-direction to yield nucleoside 5'-phosphates.</text>
        <dbReference type="EC" id="3.1.11.6"/>
    </reaction>
</comment>
<comment type="subunit">
    <text evidence="1">Heterooligomer composed of large and small subunits.</text>
</comment>
<comment type="subcellular location">
    <subcellularLocation>
        <location evidence="1">Cytoplasm</location>
    </subcellularLocation>
</comment>
<comment type="similarity">
    <text evidence="1">Belongs to the XseB family.</text>
</comment>
<gene>
    <name evidence="1" type="primary">xseB</name>
    <name type="ordered locus">SSPA2141</name>
</gene>
<keyword id="KW-0963">Cytoplasm</keyword>
<keyword id="KW-0269">Exonuclease</keyword>
<keyword id="KW-0378">Hydrolase</keyword>
<keyword id="KW-0540">Nuclease</keyword>
<sequence length="80" mass="8932">MPKKNEAPASFETALSELEHIVTRLESGDLPLEDALNEFERGVQLARQGQAKLQQAEQRVQILLSDNEEASPEPFIADNE</sequence>
<dbReference type="EC" id="3.1.11.6" evidence="1"/>
<dbReference type="EMBL" id="FM200053">
    <property type="protein sequence ID" value="CAR60351.1"/>
    <property type="molecule type" value="Genomic_DNA"/>
</dbReference>
<dbReference type="RefSeq" id="WP_001124944.1">
    <property type="nucleotide sequence ID" value="NC_011147.1"/>
</dbReference>
<dbReference type="SMR" id="B5BDA8"/>
<dbReference type="KEGG" id="sek:SSPA2141"/>
<dbReference type="HOGENOM" id="CLU_145918_3_3_6"/>
<dbReference type="Proteomes" id="UP000001869">
    <property type="component" value="Chromosome"/>
</dbReference>
<dbReference type="GO" id="GO:0005829">
    <property type="term" value="C:cytosol"/>
    <property type="evidence" value="ECO:0007669"/>
    <property type="project" value="TreeGrafter"/>
</dbReference>
<dbReference type="GO" id="GO:0009318">
    <property type="term" value="C:exodeoxyribonuclease VII complex"/>
    <property type="evidence" value="ECO:0007669"/>
    <property type="project" value="InterPro"/>
</dbReference>
<dbReference type="GO" id="GO:0008855">
    <property type="term" value="F:exodeoxyribonuclease VII activity"/>
    <property type="evidence" value="ECO:0007669"/>
    <property type="project" value="UniProtKB-UniRule"/>
</dbReference>
<dbReference type="GO" id="GO:0006308">
    <property type="term" value="P:DNA catabolic process"/>
    <property type="evidence" value="ECO:0007669"/>
    <property type="project" value="UniProtKB-UniRule"/>
</dbReference>
<dbReference type="FunFam" id="1.10.287.1040:FF:000001">
    <property type="entry name" value="Exodeoxyribonuclease 7 small subunit"/>
    <property type="match status" value="1"/>
</dbReference>
<dbReference type="Gene3D" id="1.10.287.1040">
    <property type="entry name" value="Exonuclease VII, small subunit"/>
    <property type="match status" value="1"/>
</dbReference>
<dbReference type="HAMAP" id="MF_00337">
    <property type="entry name" value="Exonuc_7_S"/>
    <property type="match status" value="1"/>
</dbReference>
<dbReference type="InterPro" id="IPR003761">
    <property type="entry name" value="Exonuc_VII_S"/>
</dbReference>
<dbReference type="InterPro" id="IPR037004">
    <property type="entry name" value="Exonuc_VII_ssu_sf"/>
</dbReference>
<dbReference type="NCBIfam" id="NF002137">
    <property type="entry name" value="PRK00977.1-1"/>
    <property type="match status" value="1"/>
</dbReference>
<dbReference type="NCBIfam" id="NF002140">
    <property type="entry name" value="PRK00977.1-4"/>
    <property type="match status" value="1"/>
</dbReference>
<dbReference type="NCBIfam" id="TIGR01280">
    <property type="entry name" value="xseB"/>
    <property type="match status" value="1"/>
</dbReference>
<dbReference type="PANTHER" id="PTHR34137">
    <property type="entry name" value="EXODEOXYRIBONUCLEASE 7 SMALL SUBUNIT"/>
    <property type="match status" value="1"/>
</dbReference>
<dbReference type="PANTHER" id="PTHR34137:SF1">
    <property type="entry name" value="EXODEOXYRIBONUCLEASE 7 SMALL SUBUNIT"/>
    <property type="match status" value="1"/>
</dbReference>
<dbReference type="Pfam" id="PF02609">
    <property type="entry name" value="Exonuc_VII_S"/>
    <property type="match status" value="1"/>
</dbReference>
<dbReference type="PIRSF" id="PIRSF006488">
    <property type="entry name" value="Exonuc_VII_S"/>
    <property type="match status" value="1"/>
</dbReference>
<dbReference type="SUPFAM" id="SSF116842">
    <property type="entry name" value="XseB-like"/>
    <property type="match status" value="1"/>
</dbReference>
<organism>
    <name type="scientific">Salmonella paratyphi A (strain AKU_12601)</name>
    <dbReference type="NCBI Taxonomy" id="554290"/>
    <lineage>
        <taxon>Bacteria</taxon>
        <taxon>Pseudomonadati</taxon>
        <taxon>Pseudomonadota</taxon>
        <taxon>Gammaproteobacteria</taxon>
        <taxon>Enterobacterales</taxon>
        <taxon>Enterobacteriaceae</taxon>
        <taxon>Salmonella</taxon>
    </lineage>
</organism>